<accession>Q8Z7J7</accession>
<proteinExistence type="inferred from homology"/>
<gene>
    <name type="primary">rluC</name>
    <name type="ordered locus">STY1227</name>
    <name type="ordered locus">t1732</name>
</gene>
<keyword id="KW-0413">Isomerase</keyword>
<keyword id="KW-0694">RNA-binding</keyword>
<keyword id="KW-0698">rRNA processing</keyword>
<organism>
    <name type="scientific">Salmonella typhi</name>
    <dbReference type="NCBI Taxonomy" id="90370"/>
    <lineage>
        <taxon>Bacteria</taxon>
        <taxon>Pseudomonadati</taxon>
        <taxon>Pseudomonadota</taxon>
        <taxon>Gammaproteobacteria</taxon>
        <taxon>Enterobacterales</taxon>
        <taxon>Enterobacteriaceae</taxon>
        <taxon>Salmonella</taxon>
    </lineage>
</organism>
<reference key="1">
    <citation type="journal article" date="2001" name="Nature">
        <title>Complete genome sequence of a multiple drug resistant Salmonella enterica serovar Typhi CT18.</title>
        <authorList>
            <person name="Parkhill J."/>
            <person name="Dougan G."/>
            <person name="James K.D."/>
            <person name="Thomson N.R."/>
            <person name="Pickard D."/>
            <person name="Wain J."/>
            <person name="Churcher C.M."/>
            <person name="Mungall K.L."/>
            <person name="Bentley S.D."/>
            <person name="Holden M.T.G."/>
            <person name="Sebaihia M."/>
            <person name="Baker S."/>
            <person name="Basham D."/>
            <person name="Brooks K."/>
            <person name="Chillingworth T."/>
            <person name="Connerton P."/>
            <person name="Cronin A."/>
            <person name="Davis P."/>
            <person name="Davies R.M."/>
            <person name="Dowd L."/>
            <person name="White N."/>
            <person name="Farrar J."/>
            <person name="Feltwell T."/>
            <person name="Hamlin N."/>
            <person name="Haque A."/>
            <person name="Hien T.T."/>
            <person name="Holroyd S."/>
            <person name="Jagels K."/>
            <person name="Krogh A."/>
            <person name="Larsen T.S."/>
            <person name="Leather S."/>
            <person name="Moule S."/>
            <person name="O'Gaora P."/>
            <person name="Parry C."/>
            <person name="Quail M.A."/>
            <person name="Rutherford K.M."/>
            <person name="Simmonds M."/>
            <person name="Skelton J."/>
            <person name="Stevens K."/>
            <person name="Whitehead S."/>
            <person name="Barrell B.G."/>
        </authorList>
    </citation>
    <scope>NUCLEOTIDE SEQUENCE [LARGE SCALE GENOMIC DNA]</scope>
    <source>
        <strain>CT18</strain>
    </source>
</reference>
<reference key="2">
    <citation type="journal article" date="2003" name="J. Bacteriol.">
        <title>Comparative genomics of Salmonella enterica serovar Typhi strains Ty2 and CT18.</title>
        <authorList>
            <person name="Deng W."/>
            <person name="Liou S.-R."/>
            <person name="Plunkett G. III"/>
            <person name="Mayhew G.F."/>
            <person name="Rose D.J."/>
            <person name="Burland V."/>
            <person name="Kodoyianni V."/>
            <person name="Schwartz D.C."/>
            <person name="Blattner F.R."/>
        </authorList>
    </citation>
    <scope>NUCLEOTIDE SEQUENCE [LARGE SCALE GENOMIC DNA]</scope>
    <source>
        <strain>ATCC 700931 / Ty2</strain>
    </source>
</reference>
<protein>
    <recommendedName>
        <fullName>Ribosomal large subunit pseudouridine synthase C</fullName>
        <ecNumber>5.4.99.24</ecNumber>
    </recommendedName>
    <alternativeName>
        <fullName>23S rRNA pseudouridine(955/2504/2580) synthase</fullName>
    </alternativeName>
    <alternativeName>
        <fullName>rRNA pseudouridylate synthase C</fullName>
    </alternativeName>
    <alternativeName>
        <fullName>rRNA-uridine isomerase C</fullName>
    </alternativeName>
</protein>
<comment type="function">
    <text evidence="1">Responsible for synthesis of pseudouridine from uracil at positions 955, 2504 and 2580 in 23S ribosomal RNA.</text>
</comment>
<comment type="catalytic activity">
    <reaction>
        <text>uridine(955/2504/2580) in 23S rRNA = pseudouridine(955/2504/2580) in 23S rRNA</text>
        <dbReference type="Rhea" id="RHEA:42528"/>
        <dbReference type="Rhea" id="RHEA-COMP:10099"/>
        <dbReference type="Rhea" id="RHEA-COMP:10100"/>
        <dbReference type="ChEBI" id="CHEBI:65314"/>
        <dbReference type="ChEBI" id="CHEBI:65315"/>
        <dbReference type="EC" id="5.4.99.24"/>
    </reaction>
</comment>
<comment type="similarity">
    <text evidence="3">Belongs to the pseudouridine synthase RluA family.</text>
</comment>
<evidence type="ECO:0000250" key="1"/>
<evidence type="ECO:0000255" key="2">
    <source>
        <dbReference type="PROSITE-ProRule" id="PRU00182"/>
    </source>
</evidence>
<evidence type="ECO:0000305" key="3"/>
<dbReference type="EC" id="5.4.99.24"/>
<dbReference type="EMBL" id="AL513382">
    <property type="protein sequence ID" value="CAD08312.1"/>
    <property type="molecule type" value="Genomic_DNA"/>
</dbReference>
<dbReference type="EMBL" id="AE014613">
    <property type="protein sequence ID" value="AAO69356.1"/>
    <property type="molecule type" value="Genomic_DNA"/>
</dbReference>
<dbReference type="RefSeq" id="NP_455681.1">
    <property type="nucleotide sequence ID" value="NC_003198.1"/>
</dbReference>
<dbReference type="RefSeq" id="WP_000846324.1">
    <property type="nucleotide sequence ID" value="NZ_WSUR01000030.1"/>
</dbReference>
<dbReference type="SMR" id="Q8Z7J7"/>
<dbReference type="STRING" id="220341.gene:17585192"/>
<dbReference type="KEGG" id="stt:t1732"/>
<dbReference type="KEGG" id="sty:STY1227"/>
<dbReference type="PATRIC" id="fig|220341.7.peg.1229"/>
<dbReference type="eggNOG" id="COG0564">
    <property type="taxonomic scope" value="Bacteria"/>
</dbReference>
<dbReference type="HOGENOM" id="CLU_016902_1_1_6"/>
<dbReference type="OMA" id="PKSHVYR"/>
<dbReference type="OrthoDB" id="9807829at2"/>
<dbReference type="Proteomes" id="UP000000541">
    <property type="component" value="Chromosome"/>
</dbReference>
<dbReference type="Proteomes" id="UP000002670">
    <property type="component" value="Chromosome"/>
</dbReference>
<dbReference type="GO" id="GO:0160141">
    <property type="term" value="F:23S rRNA pseudouridine(955/2504/2580) synthase activity"/>
    <property type="evidence" value="ECO:0007669"/>
    <property type="project" value="UniProtKB-EC"/>
</dbReference>
<dbReference type="GO" id="GO:0003723">
    <property type="term" value="F:RNA binding"/>
    <property type="evidence" value="ECO:0007669"/>
    <property type="project" value="UniProtKB-KW"/>
</dbReference>
<dbReference type="GO" id="GO:0000455">
    <property type="term" value="P:enzyme-directed rRNA pseudouridine synthesis"/>
    <property type="evidence" value="ECO:0007669"/>
    <property type="project" value="TreeGrafter"/>
</dbReference>
<dbReference type="CDD" id="cd02869">
    <property type="entry name" value="PseudoU_synth_RluA_like"/>
    <property type="match status" value="1"/>
</dbReference>
<dbReference type="CDD" id="cd00165">
    <property type="entry name" value="S4"/>
    <property type="match status" value="1"/>
</dbReference>
<dbReference type="FunFam" id="3.10.290.10:FF:000010">
    <property type="entry name" value="Pseudouridine synthase"/>
    <property type="match status" value="1"/>
</dbReference>
<dbReference type="FunFam" id="3.30.2350.10:FF:000007">
    <property type="entry name" value="Pseudouridine synthase"/>
    <property type="match status" value="1"/>
</dbReference>
<dbReference type="Gene3D" id="3.30.2350.10">
    <property type="entry name" value="Pseudouridine synthase"/>
    <property type="match status" value="1"/>
</dbReference>
<dbReference type="Gene3D" id="3.10.290.10">
    <property type="entry name" value="RNA-binding S4 domain"/>
    <property type="match status" value="1"/>
</dbReference>
<dbReference type="InterPro" id="IPR020103">
    <property type="entry name" value="PsdUridine_synth_cat_dom_sf"/>
</dbReference>
<dbReference type="InterPro" id="IPR006224">
    <property type="entry name" value="PsdUridine_synth_RluA-like_CS"/>
</dbReference>
<dbReference type="InterPro" id="IPR006225">
    <property type="entry name" value="PsdUridine_synth_RluC/D"/>
</dbReference>
<dbReference type="InterPro" id="IPR006145">
    <property type="entry name" value="PsdUridine_synth_RsuA/RluA"/>
</dbReference>
<dbReference type="InterPro" id="IPR050188">
    <property type="entry name" value="RluA_PseudoU_synthase"/>
</dbReference>
<dbReference type="InterPro" id="IPR002942">
    <property type="entry name" value="S4_RNA-bd"/>
</dbReference>
<dbReference type="InterPro" id="IPR036986">
    <property type="entry name" value="S4_RNA-bd_sf"/>
</dbReference>
<dbReference type="NCBIfam" id="NF008249">
    <property type="entry name" value="PRK11025.1"/>
    <property type="match status" value="1"/>
</dbReference>
<dbReference type="NCBIfam" id="TIGR00005">
    <property type="entry name" value="rluA_subfam"/>
    <property type="match status" value="1"/>
</dbReference>
<dbReference type="PANTHER" id="PTHR21600">
    <property type="entry name" value="MITOCHONDRIAL RNA PSEUDOURIDINE SYNTHASE"/>
    <property type="match status" value="1"/>
</dbReference>
<dbReference type="PANTHER" id="PTHR21600:SF92">
    <property type="entry name" value="RIBOSOMAL LARGE SUBUNIT PSEUDOURIDINE SYNTHASE C"/>
    <property type="match status" value="1"/>
</dbReference>
<dbReference type="Pfam" id="PF00849">
    <property type="entry name" value="PseudoU_synth_2"/>
    <property type="match status" value="1"/>
</dbReference>
<dbReference type="Pfam" id="PF01479">
    <property type="entry name" value="S4"/>
    <property type="match status" value="1"/>
</dbReference>
<dbReference type="SMART" id="SM00363">
    <property type="entry name" value="S4"/>
    <property type="match status" value="1"/>
</dbReference>
<dbReference type="SUPFAM" id="SSF55174">
    <property type="entry name" value="Alpha-L RNA-binding motif"/>
    <property type="match status" value="1"/>
</dbReference>
<dbReference type="SUPFAM" id="SSF55120">
    <property type="entry name" value="Pseudouridine synthase"/>
    <property type="match status" value="1"/>
</dbReference>
<dbReference type="PROSITE" id="PS01129">
    <property type="entry name" value="PSI_RLU"/>
    <property type="match status" value="1"/>
</dbReference>
<dbReference type="PROSITE" id="PS50889">
    <property type="entry name" value="S4"/>
    <property type="match status" value="1"/>
</dbReference>
<name>RLUC_SALTI</name>
<sequence>MKTETPSVKIVAIAADEAGQRIDNFLRTQLKGVPKSMIYRILRKGEVRVNKKRIKPEYKLESGDEVRIPPVRVAEREEEAVSPHLQKVAALADVILYEDDHILVLNKPSGTAVHGGSGLSFGVIEGLRALRPEARFLELVHRLDRDTSGVLLVAKKRSALRSLHEQLREKGMQKDYLALVRGQWQSHVKTVQAPLLKNILQSGERIVRVSQEGKPSETRFKVEERYAFATLVRCSPVTGRTHQIRVHTQYAGHPIAFDDRYGDREFDQQLTEAGTGLKRLFLHAAALKFTHPGTGDVMRIEAPMDKQLKRCLEVLRSKA</sequence>
<feature type="chain" id="PRO_0000162676" description="Ribosomal large subunit pseudouridine synthase C">
    <location>
        <begin position="1"/>
        <end position="319"/>
    </location>
</feature>
<feature type="domain" description="S4 RNA-binding" evidence="2">
    <location>
        <begin position="20"/>
        <end position="83"/>
    </location>
</feature>
<feature type="active site" evidence="1">
    <location>
        <position position="144"/>
    </location>
</feature>